<accession>Q0SMX0</accession>
<accession>G0IQ90</accession>
<evidence type="ECO:0000255" key="1">
    <source>
        <dbReference type="HAMAP-Rule" id="MF_00054"/>
    </source>
</evidence>
<evidence type="ECO:0000305" key="2"/>
<comment type="function">
    <text evidence="1">Catalyzes the GTP-dependent ribosomal translocation step during translation elongation. During this step, the ribosome changes from the pre-translocational (PRE) to the post-translocational (POST) state as the newly formed A-site-bound peptidyl-tRNA and P-site-bound deacylated tRNA move to the P and E sites, respectively. Catalyzes the coordinated movement of the two tRNA molecules, the mRNA and conformational changes in the ribosome.</text>
</comment>
<comment type="subcellular location">
    <subcellularLocation>
        <location evidence="1">Cytoplasm</location>
    </subcellularLocation>
</comment>
<comment type="similarity">
    <text evidence="1">Belongs to the TRAFAC class translation factor GTPase superfamily. Classic translation factor GTPase family. EF-G/EF-2 subfamily.</text>
</comment>
<protein>
    <recommendedName>
        <fullName evidence="1">Elongation factor G 1</fullName>
        <shortName evidence="1">EF-G 1</shortName>
    </recommendedName>
</protein>
<proteinExistence type="inferred from homology"/>
<name>EFG1_BORAP</name>
<sequence length="693" mass="77341">MDYNKLRNIGISAHIDSGKTTLTERILFYCNKIHAIHEVKGKDGVGATMDSMELERERGITIASAATHVEWKDFPINIIDTPGHVDFTIEVERSLRVLDGAILVLDSVAGVQSQSITVDRQLKRYSVPRLAFVNKCDKTGANPYNVKDQLRSKLDLNSVLMQIPIGLEDKHIGVIDLVLMKAYYFEGKDGTEIIEKEIPSELLEEAKNKREMMLDALADFNDELMELHMEGKEVPIEIIYNAIRTGTLALKLCPVFMGSAYKNKGVQLLLDAVTRFLPSPHDIKNTALDLNNNEKEIDLKIDNNLPTVALAFKLEDGQYGQLTYVRIYQGTLKKGQELINSRTSKKFKVGRLIRMHANNTEDIEFGGSGDIVALFGIECASGDTFCDPSINYSMTSMFIPDPVISLSVKPKDKKSADNMAKALGRFTKEDPTFKTYVDIESNETIIQGMGELHLGVYIERMKREFKAEVETGMPQVAYRETITGKAEFNYTHKKQSGGAGQFGRVAGFMEPLNKEGETYEFVNLIKGGVIPTEYIPSCDKGFQKAMEKGTLIGFPIVDIKITINDGQYHIVDSSDIAFQLAAIGAFREAYEKAKPTILEPIMKVTLEGPTEFQGNMFGLLNQRRGIITGSLEDGSFSKVEAEVPLSEMFGFSTVLRSSTQGKAEFSMEFLKYGKVPSAIFDELRKKFNDQNKS</sequence>
<feature type="chain" id="PRO_0000263430" description="Elongation factor G 1">
    <location>
        <begin position="1"/>
        <end position="693"/>
    </location>
</feature>
<feature type="domain" description="tr-type G">
    <location>
        <begin position="4"/>
        <end position="281"/>
    </location>
</feature>
<feature type="binding site" evidence="1">
    <location>
        <begin position="13"/>
        <end position="20"/>
    </location>
    <ligand>
        <name>GTP</name>
        <dbReference type="ChEBI" id="CHEBI:37565"/>
    </ligand>
</feature>
<feature type="binding site" evidence="1">
    <location>
        <begin position="80"/>
        <end position="84"/>
    </location>
    <ligand>
        <name>GTP</name>
        <dbReference type="ChEBI" id="CHEBI:37565"/>
    </ligand>
</feature>
<feature type="binding site" evidence="1">
    <location>
        <begin position="134"/>
        <end position="137"/>
    </location>
    <ligand>
        <name>GTP</name>
        <dbReference type="ChEBI" id="CHEBI:37565"/>
    </ligand>
</feature>
<feature type="sequence conflict" description="In Ref. 2; AEL69760." evidence="2" ref="2">
    <original>G</original>
    <variation>E</variation>
    <location>
        <position position="455"/>
    </location>
</feature>
<dbReference type="EMBL" id="CP000395">
    <property type="protein sequence ID" value="ABH01808.1"/>
    <property type="molecule type" value="Genomic_DNA"/>
</dbReference>
<dbReference type="EMBL" id="CP002933">
    <property type="protein sequence ID" value="AEL69760.1"/>
    <property type="molecule type" value="Genomic_DNA"/>
</dbReference>
<dbReference type="RefSeq" id="WP_011601076.1">
    <property type="nucleotide sequence ID" value="NC_008277.1"/>
</dbReference>
<dbReference type="SMR" id="Q0SMX0"/>
<dbReference type="STRING" id="29518.BLA32_01570"/>
<dbReference type="KEGG" id="baf:BAPKO_0568"/>
<dbReference type="KEGG" id="bafz:BafPKo_0555"/>
<dbReference type="PATRIC" id="fig|390236.22.peg.533"/>
<dbReference type="eggNOG" id="COG0480">
    <property type="taxonomic scope" value="Bacteria"/>
</dbReference>
<dbReference type="HOGENOM" id="CLU_002794_4_1_12"/>
<dbReference type="OrthoDB" id="9804431at2"/>
<dbReference type="Proteomes" id="UP000005216">
    <property type="component" value="Chromosome"/>
</dbReference>
<dbReference type="GO" id="GO:0005737">
    <property type="term" value="C:cytoplasm"/>
    <property type="evidence" value="ECO:0007669"/>
    <property type="project" value="UniProtKB-SubCell"/>
</dbReference>
<dbReference type="GO" id="GO:0005525">
    <property type="term" value="F:GTP binding"/>
    <property type="evidence" value="ECO:0007669"/>
    <property type="project" value="UniProtKB-UniRule"/>
</dbReference>
<dbReference type="GO" id="GO:0003924">
    <property type="term" value="F:GTPase activity"/>
    <property type="evidence" value="ECO:0007669"/>
    <property type="project" value="InterPro"/>
</dbReference>
<dbReference type="GO" id="GO:0003746">
    <property type="term" value="F:translation elongation factor activity"/>
    <property type="evidence" value="ECO:0007669"/>
    <property type="project" value="UniProtKB-UniRule"/>
</dbReference>
<dbReference type="CDD" id="cd01886">
    <property type="entry name" value="EF-G"/>
    <property type="match status" value="1"/>
</dbReference>
<dbReference type="CDD" id="cd16262">
    <property type="entry name" value="EFG_III"/>
    <property type="match status" value="1"/>
</dbReference>
<dbReference type="CDD" id="cd01434">
    <property type="entry name" value="EFG_mtEFG1_IV"/>
    <property type="match status" value="1"/>
</dbReference>
<dbReference type="CDD" id="cd04091">
    <property type="entry name" value="mtEFG1_II_like"/>
    <property type="match status" value="1"/>
</dbReference>
<dbReference type="FunFam" id="3.30.230.10:FF:000003">
    <property type="entry name" value="Elongation factor G"/>
    <property type="match status" value="1"/>
</dbReference>
<dbReference type="FunFam" id="3.30.70.240:FF:000001">
    <property type="entry name" value="Elongation factor G"/>
    <property type="match status" value="1"/>
</dbReference>
<dbReference type="FunFam" id="3.30.70.870:FF:000001">
    <property type="entry name" value="Elongation factor G"/>
    <property type="match status" value="1"/>
</dbReference>
<dbReference type="FunFam" id="3.40.50.300:FF:000029">
    <property type="entry name" value="Elongation factor G"/>
    <property type="match status" value="1"/>
</dbReference>
<dbReference type="FunFam" id="2.40.30.10:FF:000022">
    <property type="entry name" value="Elongation factor G, mitochondrial"/>
    <property type="match status" value="1"/>
</dbReference>
<dbReference type="Gene3D" id="3.30.230.10">
    <property type="match status" value="1"/>
</dbReference>
<dbReference type="Gene3D" id="3.30.70.240">
    <property type="match status" value="1"/>
</dbReference>
<dbReference type="Gene3D" id="3.30.70.870">
    <property type="entry name" value="Elongation Factor G (Translational Gtpase), domain 3"/>
    <property type="match status" value="1"/>
</dbReference>
<dbReference type="Gene3D" id="3.40.50.300">
    <property type="entry name" value="P-loop containing nucleotide triphosphate hydrolases"/>
    <property type="match status" value="1"/>
</dbReference>
<dbReference type="Gene3D" id="2.40.30.10">
    <property type="entry name" value="Translation factors"/>
    <property type="match status" value="1"/>
</dbReference>
<dbReference type="HAMAP" id="MF_00054_B">
    <property type="entry name" value="EF_G_EF_2_B"/>
    <property type="match status" value="1"/>
</dbReference>
<dbReference type="InterPro" id="IPR041095">
    <property type="entry name" value="EFG_II"/>
</dbReference>
<dbReference type="InterPro" id="IPR009022">
    <property type="entry name" value="EFG_III"/>
</dbReference>
<dbReference type="InterPro" id="IPR035647">
    <property type="entry name" value="EFG_III/V"/>
</dbReference>
<dbReference type="InterPro" id="IPR047872">
    <property type="entry name" value="EFG_IV"/>
</dbReference>
<dbReference type="InterPro" id="IPR000640">
    <property type="entry name" value="EFG_V-like"/>
</dbReference>
<dbReference type="InterPro" id="IPR004161">
    <property type="entry name" value="EFTu-like_2"/>
</dbReference>
<dbReference type="InterPro" id="IPR031157">
    <property type="entry name" value="G_TR_CS"/>
</dbReference>
<dbReference type="InterPro" id="IPR027417">
    <property type="entry name" value="P-loop_NTPase"/>
</dbReference>
<dbReference type="InterPro" id="IPR020568">
    <property type="entry name" value="Ribosomal_Su5_D2-typ_SF"/>
</dbReference>
<dbReference type="InterPro" id="IPR014721">
    <property type="entry name" value="Ribsml_uS5_D2-typ_fold_subgr"/>
</dbReference>
<dbReference type="InterPro" id="IPR005225">
    <property type="entry name" value="Small_GTP-bd"/>
</dbReference>
<dbReference type="InterPro" id="IPR000795">
    <property type="entry name" value="T_Tr_GTP-bd_dom"/>
</dbReference>
<dbReference type="InterPro" id="IPR009000">
    <property type="entry name" value="Transl_B-barrel_sf"/>
</dbReference>
<dbReference type="InterPro" id="IPR004540">
    <property type="entry name" value="Transl_elong_EFG/EF2"/>
</dbReference>
<dbReference type="InterPro" id="IPR005517">
    <property type="entry name" value="Transl_elong_EFG/EF2_IV"/>
</dbReference>
<dbReference type="NCBIfam" id="TIGR00484">
    <property type="entry name" value="EF-G"/>
    <property type="match status" value="1"/>
</dbReference>
<dbReference type="NCBIfam" id="NF009381">
    <property type="entry name" value="PRK12740.1-5"/>
    <property type="match status" value="1"/>
</dbReference>
<dbReference type="NCBIfam" id="TIGR00231">
    <property type="entry name" value="small_GTP"/>
    <property type="match status" value="1"/>
</dbReference>
<dbReference type="PANTHER" id="PTHR43636">
    <property type="entry name" value="ELONGATION FACTOR G, MITOCHONDRIAL"/>
    <property type="match status" value="1"/>
</dbReference>
<dbReference type="PANTHER" id="PTHR43636:SF2">
    <property type="entry name" value="ELONGATION FACTOR G, MITOCHONDRIAL"/>
    <property type="match status" value="1"/>
</dbReference>
<dbReference type="Pfam" id="PF00679">
    <property type="entry name" value="EFG_C"/>
    <property type="match status" value="1"/>
</dbReference>
<dbReference type="Pfam" id="PF14492">
    <property type="entry name" value="EFG_III"/>
    <property type="match status" value="1"/>
</dbReference>
<dbReference type="Pfam" id="PF03764">
    <property type="entry name" value="EFG_IV"/>
    <property type="match status" value="1"/>
</dbReference>
<dbReference type="Pfam" id="PF00009">
    <property type="entry name" value="GTP_EFTU"/>
    <property type="match status" value="1"/>
</dbReference>
<dbReference type="Pfam" id="PF03144">
    <property type="entry name" value="GTP_EFTU_D2"/>
    <property type="match status" value="1"/>
</dbReference>
<dbReference type="PRINTS" id="PR00315">
    <property type="entry name" value="ELONGATNFCT"/>
</dbReference>
<dbReference type="SMART" id="SM00838">
    <property type="entry name" value="EFG_C"/>
    <property type="match status" value="1"/>
</dbReference>
<dbReference type="SMART" id="SM00889">
    <property type="entry name" value="EFG_IV"/>
    <property type="match status" value="1"/>
</dbReference>
<dbReference type="SUPFAM" id="SSF54980">
    <property type="entry name" value="EF-G C-terminal domain-like"/>
    <property type="match status" value="2"/>
</dbReference>
<dbReference type="SUPFAM" id="SSF52540">
    <property type="entry name" value="P-loop containing nucleoside triphosphate hydrolases"/>
    <property type="match status" value="1"/>
</dbReference>
<dbReference type="SUPFAM" id="SSF54211">
    <property type="entry name" value="Ribosomal protein S5 domain 2-like"/>
    <property type="match status" value="1"/>
</dbReference>
<dbReference type="SUPFAM" id="SSF50447">
    <property type="entry name" value="Translation proteins"/>
    <property type="match status" value="1"/>
</dbReference>
<dbReference type="PROSITE" id="PS00301">
    <property type="entry name" value="G_TR_1"/>
    <property type="match status" value="1"/>
</dbReference>
<dbReference type="PROSITE" id="PS51722">
    <property type="entry name" value="G_TR_2"/>
    <property type="match status" value="1"/>
</dbReference>
<organism>
    <name type="scientific">Borreliella afzelii (strain PKo)</name>
    <name type="common">Borrelia afzelii</name>
    <dbReference type="NCBI Taxonomy" id="390236"/>
    <lineage>
        <taxon>Bacteria</taxon>
        <taxon>Pseudomonadati</taxon>
        <taxon>Spirochaetota</taxon>
        <taxon>Spirochaetia</taxon>
        <taxon>Spirochaetales</taxon>
        <taxon>Borreliaceae</taxon>
        <taxon>Borreliella</taxon>
    </lineage>
</organism>
<keyword id="KW-0963">Cytoplasm</keyword>
<keyword id="KW-0251">Elongation factor</keyword>
<keyword id="KW-0342">GTP-binding</keyword>
<keyword id="KW-0547">Nucleotide-binding</keyword>
<keyword id="KW-0648">Protein biosynthesis</keyword>
<reference key="1">
    <citation type="journal article" date="2006" name="BMC Genomics">
        <title>Comparative genome analysis: selection pressure on the Borrelia vls cassettes is essential for infectivity.</title>
        <authorList>
            <person name="Gloeckner G."/>
            <person name="Schulte-Spechtel U."/>
            <person name="Schilhabel M."/>
            <person name="Felder M."/>
            <person name="Suehnel J."/>
            <person name="Wilske B."/>
            <person name="Platzer M."/>
        </authorList>
    </citation>
    <scope>NUCLEOTIDE SEQUENCE [LARGE SCALE GENOMIC DNA]</scope>
    <source>
        <strain>PKo</strain>
    </source>
</reference>
<reference key="2">
    <citation type="journal article" date="2011" name="J. Bacteriol.">
        <title>Whole-genome sequences of two Borrelia afzelii and two Borrelia garinii Lyme disease agent isolates.</title>
        <authorList>
            <person name="Casjens S.R."/>
            <person name="Mongodin E.F."/>
            <person name="Qiu W.G."/>
            <person name="Dunn J.J."/>
            <person name="Luft B.J."/>
            <person name="Fraser-Liggett C.M."/>
            <person name="Schutzer S.E."/>
        </authorList>
    </citation>
    <scope>NUCLEOTIDE SEQUENCE [LARGE SCALE GENOMIC DNA]</scope>
    <source>
        <strain>PKo</strain>
    </source>
</reference>
<gene>
    <name evidence="1" type="primary">fusA1</name>
    <name type="ordered locus">BAPKO_0568</name>
    <name type="ordered locus">BafPKo_0555</name>
</gene>